<sequence length="267" mass="31483">MSLESLFQHIIFSEHQAEESRRVMREVRSEITRCRGKIKKATEDLSEEKIKLESKVQQLSEKSFLLELLKTHENALERQLSEIISERDTLLQACEAIKNKTTEEEERFIKEITDFNDNYEITKKRDTLMKENIEMEMADLDSQADVLRREMKSVERNRGQLWELQKLKNELLQELFTLQKKLKVLKDEETEAICITKQLEAEKTKVRDKPQHDPECVRLKRELDLYKAEDMESVYRALQAEVDLLELALAPKDPQDSNSLSHEPPHT</sequence>
<gene>
    <name type="primary">Ccdc172</name>
    <name evidence="4" type="synonym">Tekt2bp1</name>
</gene>
<protein>
    <recommendedName>
        <fullName>Coiled-coil domain-containing protein 172</fullName>
    </recommendedName>
    <alternativeName>
        <fullName evidence="4">TEKT2-binding protein 2</fullName>
    </alternativeName>
</protein>
<evidence type="ECO:0000250" key="1">
    <source>
        <dbReference type="UniProtKB" id="Q6AXT4"/>
    </source>
</evidence>
<evidence type="ECO:0000255" key="2"/>
<evidence type="ECO:0000269" key="3">
    <source>
    </source>
</evidence>
<evidence type="ECO:0000303" key="4">
    <source>
    </source>
</evidence>
<evidence type="ECO:0000305" key="5"/>
<organism>
    <name type="scientific">Mus musculus</name>
    <name type="common">Mouse</name>
    <dbReference type="NCBI Taxonomy" id="10090"/>
    <lineage>
        <taxon>Eukaryota</taxon>
        <taxon>Metazoa</taxon>
        <taxon>Chordata</taxon>
        <taxon>Craniata</taxon>
        <taxon>Vertebrata</taxon>
        <taxon>Euteleostomi</taxon>
        <taxon>Mammalia</taxon>
        <taxon>Eutheria</taxon>
        <taxon>Euarchontoglires</taxon>
        <taxon>Glires</taxon>
        <taxon>Rodentia</taxon>
        <taxon>Myomorpha</taxon>
        <taxon>Muroidea</taxon>
        <taxon>Muridae</taxon>
        <taxon>Murinae</taxon>
        <taxon>Mus</taxon>
        <taxon>Mus</taxon>
    </lineage>
</organism>
<accession>Q810N9</accession>
<accession>Q9DAG3</accession>
<proteinExistence type="evidence at protein level"/>
<name>CC172_MOUSE</name>
<feature type="chain" id="PRO_0000344514" description="Coiled-coil domain-containing protein 172">
    <location>
        <begin position="1"/>
        <end position="267"/>
    </location>
</feature>
<feature type="coiled-coil region" evidence="2">
    <location>
        <begin position="24"/>
        <end position="97"/>
    </location>
</feature>
<feature type="coiled-coil region" evidence="2">
    <location>
        <begin position="128"/>
        <end position="191"/>
    </location>
</feature>
<feature type="splice variant" id="VSP_034843" description="In isoform 2." evidence="5">
    <original>EMKSVERNRGQLWELQKLKNELLQELFTLQKKLKVLKDEETEAICITKQLEAEKTKVRDKPQHDPECV</original>
    <variation>D</variation>
    <location>
        <begin position="150"/>
        <end position="217"/>
    </location>
</feature>
<dbReference type="EMBL" id="AK005864">
    <property type="protein sequence ID" value="BAB24284.1"/>
    <property type="molecule type" value="mRNA"/>
</dbReference>
<dbReference type="EMBL" id="BC049707">
    <property type="protein sequence ID" value="AAH49707.1"/>
    <property type="molecule type" value="mRNA"/>
</dbReference>
<dbReference type="CCDS" id="CCDS38029.1">
    <molecule id="Q810N9-1"/>
</dbReference>
<dbReference type="RefSeq" id="NP_001360897.2">
    <molecule id="Q810N9-1"/>
    <property type="nucleotide sequence ID" value="NM_001373968.2"/>
</dbReference>
<dbReference type="RefSeq" id="NP_001360898.1">
    <molecule id="Q810N9-1"/>
    <property type="nucleotide sequence ID" value="NM_001373969.2"/>
</dbReference>
<dbReference type="RefSeq" id="NP_001360968.1">
    <molecule id="Q810N9-2"/>
    <property type="nucleotide sequence ID" value="NM_001374039.1"/>
</dbReference>
<dbReference type="RefSeq" id="NP_083648.1">
    <molecule id="Q810N9-1"/>
    <property type="nucleotide sequence ID" value="NM_029372.3"/>
</dbReference>
<dbReference type="RefSeq" id="XP_006527487.1">
    <property type="nucleotide sequence ID" value="XM_006527424.1"/>
</dbReference>
<dbReference type="SMR" id="Q810N9"/>
<dbReference type="FunCoup" id="Q810N9">
    <property type="interactions" value="30"/>
</dbReference>
<dbReference type="STRING" id="10090.ENSMUSP00000068972"/>
<dbReference type="iPTMnet" id="Q810N9"/>
<dbReference type="PhosphoSitePlus" id="Q810N9"/>
<dbReference type="PaxDb" id="10090-ENSMUSP00000068972"/>
<dbReference type="Antibodypedia" id="46242">
    <property type="antibodies" value="36 antibodies from 9 providers"/>
</dbReference>
<dbReference type="DNASU" id="75645"/>
<dbReference type="Ensembl" id="ENSMUST00000069419.8">
    <molecule id="Q810N9-1"/>
    <property type="protein sequence ID" value="ENSMUSP00000068972.7"/>
    <property type="gene ID" value="ENSMUSG00000025090.10"/>
</dbReference>
<dbReference type="Ensembl" id="ENSMUST00000235305.2">
    <molecule id="Q810N9-2"/>
    <property type="protein sequence ID" value="ENSMUSP00000158558.2"/>
    <property type="gene ID" value="ENSMUSG00000025090.10"/>
</dbReference>
<dbReference type="GeneID" id="75645"/>
<dbReference type="KEGG" id="mmu:75645"/>
<dbReference type="UCSC" id="uc008iao.1">
    <molecule id="Q810N9-1"/>
    <property type="organism name" value="mouse"/>
</dbReference>
<dbReference type="UCSC" id="uc012bnz.1">
    <molecule id="Q810N9-2"/>
    <property type="organism name" value="mouse"/>
</dbReference>
<dbReference type="AGR" id="MGI:1922895"/>
<dbReference type="CTD" id="374355"/>
<dbReference type="MGI" id="MGI:1922895">
    <property type="gene designation" value="Ccdc172"/>
</dbReference>
<dbReference type="VEuPathDB" id="HostDB:ENSMUSG00000025090"/>
<dbReference type="eggNOG" id="ENOG502RZCX">
    <property type="taxonomic scope" value="Eukaryota"/>
</dbReference>
<dbReference type="GeneTree" id="ENSGT00390000005203"/>
<dbReference type="HOGENOM" id="CLU_094609_0_0_1"/>
<dbReference type="InParanoid" id="Q810N9"/>
<dbReference type="OMA" id="RQCNEIT"/>
<dbReference type="OrthoDB" id="10055570at2759"/>
<dbReference type="PhylomeDB" id="Q810N9"/>
<dbReference type="TreeFam" id="TF333231"/>
<dbReference type="BioGRID-ORCS" id="75645">
    <property type="hits" value="3 hits in 77 CRISPR screens"/>
</dbReference>
<dbReference type="ChiTaRS" id="Ccdc172">
    <property type="organism name" value="mouse"/>
</dbReference>
<dbReference type="PRO" id="PR:Q810N9"/>
<dbReference type="Proteomes" id="UP000000589">
    <property type="component" value="Chromosome 19"/>
</dbReference>
<dbReference type="RNAct" id="Q810N9">
    <property type="molecule type" value="protein"/>
</dbReference>
<dbReference type="Bgee" id="ENSMUSG00000025090">
    <property type="expression patterns" value="Expressed in spermatocyte and 31 other cell types or tissues"/>
</dbReference>
<dbReference type="GO" id="GO:0005737">
    <property type="term" value="C:cytoplasm"/>
    <property type="evidence" value="ECO:0000314"/>
    <property type="project" value="UniProtKB"/>
</dbReference>
<dbReference type="GO" id="GO:0097225">
    <property type="term" value="C:sperm midpiece"/>
    <property type="evidence" value="ECO:0000250"/>
    <property type="project" value="UniProtKB"/>
</dbReference>
<dbReference type="InterPro" id="IPR029618">
    <property type="entry name" value="CCDC172"/>
</dbReference>
<dbReference type="PANTHER" id="PTHR22419">
    <property type="entry name" value="COILED-COIL DOMAIN-CONTAINING PROTEIN 172"/>
    <property type="match status" value="1"/>
</dbReference>
<dbReference type="PANTHER" id="PTHR22419:SF2">
    <property type="entry name" value="COILED-COIL DOMAIN-CONTAINING PROTEIN 172"/>
    <property type="match status" value="1"/>
</dbReference>
<keyword id="KW-0025">Alternative splicing</keyword>
<keyword id="KW-0966">Cell projection</keyword>
<keyword id="KW-0175">Coiled coil</keyword>
<keyword id="KW-0963">Cytoplasm</keyword>
<keyword id="KW-1185">Reference proteome</keyword>
<comment type="subunit">
    <text evidence="3">May interact with TEKT2.</text>
</comment>
<comment type="subcellular location">
    <subcellularLocation>
        <location evidence="3">Cytoplasm</location>
    </subcellularLocation>
    <subcellularLocation>
        <location evidence="1">Cell projection</location>
        <location evidence="1">Cilium</location>
    </subcellularLocation>
    <text evidence="1 3">In caput spermatozoa, localized in the middle piece, predominantly concentrated at the mitochondrial sheath of the flagella and to a lesser extent with outer dense fibers (ODF) (By similarity). Colocalized with TEKT2 at the perinuclear region (PubMed:24394471).</text>
</comment>
<comment type="alternative products">
    <event type="alternative splicing"/>
    <isoform>
        <id>Q810N9-1</id>
        <name>1</name>
        <sequence type="displayed"/>
    </isoform>
    <isoform>
        <id>Q810N9-2</id>
        <name>2</name>
        <sequence type="described" ref="VSP_034843"/>
    </isoform>
</comment>
<comment type="similarity">
    <text evidence="5">Belongs to the CCDC172 family.</text>
</comment>
<reference key="1">
    <citation type="journal article" date="2005" name="Science">
        <title>The transcriptional landscape of the mammalian genome.</title>
        <authorList>
            <person name="Carninci P."/>
            <person name="Kasukawa T."/>
            <person name="Katayama S."/>
            <person name="Gough J."/>
            <person name="Frith M.C."/>
            <person name="Maeda N."/>
            <person name="Oyama R."/>
            <person name="Ravasi T."/>
            <person name="Lenhard B."/>
            <person name="Wells C."/>
            <person name="Kodzius R."/>
            <person name="Shimokawa K."/>
            <person name="Bajic V.B."/>
            <person name="Brenner S.E."/>
            <person name="Batalov S."/>
            <person name="Forrest A.R."/>
            <person name="Zavolan M."/>
            <person name="Davis M.J."/>
            <person name="Wilming L.G."/>
            <person name="Aidinis V."/>
            <person name="Allen J.E."/>
            <person name="Ambesi-Impiombato A."/>
            <person name="Apweiler R."/>
            <person name="Aturaliya R.N."/>
            <person name="Bailey T.L."/>
            <person name="Bansal M."/>
            <person name="Baxter L."/>
            <person name="Beisel K.W."/>
            <person name="Bersano T."/>
            <person name="Bono H."/>
            <person name="Chalk A.M."/>
            <person name="Chiu K.P."/>
            <person name="Choudhary V."/>
            <person name="Christoffels A."/>
            <person name="Clutterbuck D.R."/>
            <person name="Crowe M.L."/>
            <person name="Dalla E."/>
            <person name="Dalrymple B.P."/>
            <person name="de Bono B."/>
            <person name="Della Gatta G."/>
            <person name="di Bernardo D."/>
            <person name="Down T."/>
            <person name="Engstrom P."/>
            <person name="Fagiolini M."/>
            <person name="Faulkner G."/>
            <person name="Fletcher C.F."/>
            <person name="Fukushima T."/>
            <person name="Furuno M."/>
            <person name="Futaki S."/>
            <person name="Gariboldi M."/>
            <person name="Georgii-Hemming P."/>
            <person name="Gingeras T.R."/>
            <person name="Gojobori T."/>
            <person name="Green R.E."/>
            <person name="Gustincich S."/>
            <person name="Harbers M."/>
            <person name="Hayashi Y."/>
            <person name="Hensch T.K."/>
            <person name="Hirokawa N."/>
            <person name="Hill D."/>
            <person name="Huminiecki L."/>
            <person name="Iacono M."/>
            <person name="Ikeo K."/>
            <person name="Iwama A."/>
            <person name="Ishikawa T."/>
            <person name="Jakt M."/>
            <person name="Kanapin A."/>
            <person name="Katoh M."/>
            <person name="Kawasawa Y."/>
            <person name="Kelso J."/>
            <person name="Kitamura H."/>
            <person name="Kitano H."/>
            <person name="Kollias G."/>
            <person name="Krishnan S.P."/>
            <person name="Kruger A."/>
            <person name="Kummerfeld S.K."/>
            <person name="Kurochkin I.V."/>
            <person name="Lareau L.F."/>
            <person name="Lazarevic D."/>
            <person name="Lipovich L."/>
            <person name="Liu J."/>
            <person name="Liuni S."/>
            <person name="McWilliam S."/>
            <person name="Madan Babu M."/>
            <person name="Madera M."/>
            <person name="Marchionni L."/>
            <person name="Matsuda H."/>
            <person name="Matsuzawa S."/>
            <person name="Miki H."/>
            <person name="Mignone F."/>
            <person name="Miyake S."/>
            <person name="Morris K."/>
            <person name="Mottagui-Tabar S."/>
            <person name="Mulder N."/>
            <person name="Nakano N."/>
            <person name="Nakauchi H."/>
            <person name="Ng P."/>
            <person name="Nilsson R."/>
            <person name="Nishiguchi S."/>
            <person name="Nishikawa S."/>
            <person name="Nori F."/>
            <person name="Ohara O."/>
            <person name="Okazaki Y."/>
            <person name="Orlando V."/>
            <person name="Pang K.C."/>
            <person name="Pavan W.J."/>
            <person name="Pavesi G."/>
            <person name="Pesole G."/>
            <person name="Petrovsky N."/>
            <person name="Piazza S."/>
            <person name="Reed J."/>
            <person name="Reid J.F."/>
            <person name="Ring B.Z."/>
            <person name="Ringwald M."/>
            <person name="Rost B."/>
            <person name="Ruan Y."/>
            <person name="Salzberg S.L."/>
            <person name="Sandelin A."/>
            <person name="Schneider C."/>
            <person name="Schoenbach C."/>
            <person name="Sekiguchi K."/>
            <person name="Semple C.A."/>
            <person name="Seno S."/>
            <person name="Sessa L."/>
            <person name="Sheng Y."/>
            <person name="Shibata Y."/>
            <person name="Shimada H."/>
            <person name="Shimada K."/>
            <person name="Silva D."/>
            <person name="Sinclair B."/>
            <person name="Sperling S."/>
            <person name="Stupka E."/>
            <person name="Sugiura K."/>
            <person name="Sultana R."/>
            <person name="Takenaka Y."/>
            <person name="Taki K."/>
            <person name="Tammoja K."/>
            <person name="Tan S.L."/>
            <person name="Tang S."/>
            <person name="Taylor M.S."/>
            <person name="Tegner J."/>
            <person name="Teichmann S.A."/>
            <person name="Ueda H.R."/>
            <person name="van Nimwegen E."/>
            <person name="Verardo R."/>
            <person name="Wei C.L."/>
            <person name="Yagi K."/>
            <person name="Yamanishi H."/>
            <person name="Zabarovsky E."/>
            <person name="Zhu S."/>
            <person name="Zimmer A."/>
            <person name="Hide W."/>
            <person name="Bult C."/>
            <person name="Grimmond S.M."/>
            <person name="Teasdale R.D."/>
            <person name="Liu E.T."/>
            <person name="Brusic V."/>
            <person name="Quackenbush J."/>
            <person name="Wahlestedt C."/>
            <person name="Mattick J.S."/>
            <person name="Hume D.A."/>
            <person name="Kai C."/>
            <person name="Sasaki D."/>
            <person name="Tomaru Y."/>
            <person name="Fukuda S."/>
            <person name="Kanamori-Katayama M."/>
            <person name="Suzuki M."/>
            <person name="Aoki J."/>
            <person name="Arakawa T."/>
            <person name="Iida J."/>
            <person name="Imamura K."/>
            <person name="Itoh M."/>
            <person name="Kato T."/>
            <person name="Kawaji H."/>
            <person name="Kawagashira N."/>
            <person name="Kawashima T."/>
            <person name="Kojima M."/>
            <person name="Kondo S."/>
            <person name="Konno H."/>
            <person name="Nakano K."/>
            <person name="Ninomiya N."/>
            <person name="Nishio T."/>
            <person name="Okada M."/>
            <person name="Plessy C."/>
            <person name="Shibata K."/>
            <person name="Shiraki T."/>
            <person name="Suzuki S."/>
            <person name="Tagami M."/>
            <person name="Waki K."/>
            <person name="Watahiki A."/>
            <person name="Okamura-Oho Y."/>
            <person name="Suzuki H."/>
            <person name="Kawai J."/>
            <person name="Hayashizaki Y."/>
        </authorList>
    </citation>
    <scope>NUCLEOTIDE SEQUENCE [LARGE SCALE MRNA]</scope>
    <source>
        <strain>C57BL/6J</strain>
        <tissue>Testis</tissue>
    </source>
</reference>
<reference key="2">
    <citation type="journal article" date="2004" name="Genome Res.">
        <title>The status, quality, and expansion of the NIH full-length cDNA project: the Mammalian Gene Collection (MGC).</title>
        <authorList>
            <consortium name="The MGC Project Team"/>
        </authorList>
    </citation>
    <scope>NUCLEOTIDE SEQUENCE [LARGE SCALE MRNA]</scope>
    <source>
        <tissue>Testis</tissue>
    </source>
</reference>
<reference key="3">
    <citation type="journal article" date="2014" name="J. Histochem. Cytochem.">
        <title>Molecular cloning and subcellular localization of Tektin2-binding protein 1 (Ccdc 172) in rat spermatozoa.</title>
        <authorList>
            <person name="Yamaguchi A."/>
            <person name="Kaneko T."/>
            <person name="Inai T."/>
            <person name="Iida H."/>
        </authorList>
    </citation>
    <scope>SUBCELLULAR LOCATION</scope>
    <scope>INTERACTION WITH TEKT2</scope>
</reference>